<protein>
    <recommendedName>
        <fullName evidence="1">Serine hydroxymethyltransferase 1</fullName>
        <shortName evidence="1">SHMT 1</shortName>
        <shortName evidence="1">Serine methylase 1</shortName>
        <ecNumber evidence="1">2.1.2.1</ecNumber>
    </recommendedName>
</protein>
<gene>
    <name evidence="1" type="primary">glyA1</name>
    <name type="ordered locus">VP0715</name>
</gene>
<keyword id="KW-0028">Amino-acid biosynthesis</keyword>
<keyword id="KW-0963">Cytoplasm</keyword>
<keyword id="KW-0554">One-carbon metabolism</keyword>
<keyword id="KW-0663">Pyridoxal phosphate</keyword>
<keyword id="KW-0808">Transferase</keyword>
<accession>Q87RR2</accession>
<reference key="1">
    <citation type="journal article" date="2003" name="Lancet">
        <title>Genome sequence of Vibrio parahaemolyticus: a pathogenic mechanism distinct from that of V. cholerae.</title>
        <authorList>
            <person name="Makino K."/>
            <person name="Oshima K."/>
            <person name="Kurokawa K."/>
            <person name="Yokoyama K."/>
            <person name="Uda T."/>
            <person name="Tagomori K."/>
            <person name="Iijima Y."/>
            <person name="Najima M."/>
            <person name="Nakano M."/>
            <person name="Yamashita A."/>
            <person name="Kubota Y."/>
            <person name="Kimura S."/>
            <person name="Yasunaga T."/>
            <person name="Honda T."/>
            <person name="Shinagawa H."/>
            <person name="Hattori M."/>
            <person name="Iida T."/>
        </authorList>
    </citation>
    <scope>NUCLEOTIDE SEQUENCE [LARGE SCALE GENOMIC DNA]</scope>
    <source>
        <strain>RIMD 2210633</strain>
    </source>
</reference>
<comment type="function">
    <text evidence="1">Catalyzes the reversible interconversion of serine and glycine with tetrahydrofolate (THF) serving as the one-carbon carrier. This reaction serves as the major source of one-carbon groups required for the biosynthesis of purines, thymidylate, methionine, and other important biomolecules. Also exhibits THF-independent aldolase activity toward beta-hydroxyamino acids, producing glycine and aldehydes, via a retro-aldol mechanism.</text>
</comment>
<comment type="catalytic activity">
    <reaction evidence="1">
        <text>(6R)-5,10-methylene-5,6,7,8-tetrahydrofolate + glycine + H2O = (6S)-5,6,7,8-tetrahydrofolate + L-serine</text>
        <dbReference type="Rhea" id="RHEA:15481"/>
        <dbReference type="ChEBI" id="CHEBI:15377"/>
        <dbReference type="ChEBI" id="CHEBI:15636"/>
        <dbReference type="ChEBI" id="CHEBI:33384"/>
        <dbReference type="ChEBI" id="CHEBI:57305"/>
        <dbReference type="ChEBI" id="CHEBI:57453"/>
        <dbReference type="EC" id="2.1.2.1"/>
    </reaction>
</comment>
<comment type="cofactor">
    <cofactor evidence="1">
        <name>pyridoxal 5'-phosphate</name>
        <dbReference type="ChEBI" id="CHEBI:597326"/>
    </cofactor>
</comment>
<comment type="pathway">
    <text evidence="1">One-carbon metabolism; tetrahydrofolate interconversion.</text>
</comment>
<comment type="pathway">
    <text evidence="1">Amino-acid biosynthesis; glycine biosynthesis; glycine from L-serine: step 1/1.</text>
</comment>
<comment type="subunit">
    <text evidence="1">Homodimer.</text>
</comment>
<comment type="subcellular location">
    <subcellularLocation>
        <location evidence="1">Cytoplasm</location>
    </subcellularLocation>
</comment>
<comment type="similarity">
    <text evidence="1">Belongs to the SHMT family.</text>
</comment>
<organism>
    <name type="scientific">Vibrio parahaemolyticus serotype O3:K6 (strain RIMD 2210633)</name>
    <dbReference type="NCBI Taxonomy" id="223926"/>
    <lineage>
        <taxon>Bacteria</taxon>
        <taxon>Pseudomonadati</taxon>
        <taxon>Pseudomonadota</taxon>
        <taxon>Gammaproteobacteria</taxon>
        <taxon>Vibrionales</taxon>
        <taxon>Vibrionaceae</taxon>
        <taxon>Vibrio</taxon>
    </lineage>
</organism>
<evidence type="ECO:0000255" key="1">
    <source>
        <dbReference type="HAMAP-Rule" id="MF_00051"/>
    </source>
</evidence>
<feature type="chain" id="PRO_0000113692" description="Serine hydroxymethyltransferase 1">
    <location>
        <begin position="1"/>
        <end position="416"/>
    </location>
</feature>
<feature type="binding site" evidence="1">
    <location>
        <position position="121"/>
    </location>
    <ligand>
        <name>(6S)-5,6,7,8-tetrahydrofolate</name>
        <dbReference type="ChEBI" id="CHEBI:57453"/>
    </ligand>
</feature>
<feature type="binding site" evidence="1">
    <location>
        <begin position="125"/>
        <end position="127"/>
    </location>
    <ligand>
        <name>(6S)-5,6,7,8-tetrahydrofolate</name>
        <dbReference type="ChEBI" id="CHEBI:57453"/>
    </ligand>
</feature>
<feature type="binding site" evidence="1">
    <location>
        <position position="245"/>
    </location>
    <ligand>
        <name>(6S)-5,6,7,8-tetrahydrofolate</name>
        <dbReference type="ChEBI" id="CHEBI:57453"/>
    </ligand>
</feature>
<feature type="binding site" evidence="1">
    <location>
        <begin position="354"/>
        <end position="356"/>
    </location>
    <ligand>
        <name>(6S)-5,6,7,8-tetrahydrofolate</name>
        <dbReference type="ChEBI" id="CHEBI:57453"/>
    </ligand>
</feature>
<feature type="site" description="Plays an important role in substrate specificity" evidence="1">
    <location>
        <position position="228"/>
    </location>
</feature>
<feature type="modified residue" description="N6-(pyridoxal phosphate)lysine" evidence="1">
    <location>
        <position position="229"/>
    </location>
</feature>
<name>GLYA1_VIBPA</name>
<sequence>MLKRDMNIADYDAELFAAIQEETLRQEEHIELIASENYTSPRVMEAQGSQLTNKYAEGYPGKRYYGGCEYVDKAEQLAIDRACKLFGCEYANVQPHSGSQANSAVYMALLNPGDTVLGMSLAHGGHLTHGSPVNFSGKHYNVIPYGIDEAGQINYDEMEQLALEHKPKMIIGGFSAYSQIVDWKRMREIADKVDAYLFVDMAHVAGLIAAGEYPTPVPHAHVVTTTTHKTLAGPRGGLILSNAGEDMYKKLNSAVFPGGQGGPLMHVIAGKAVAFKEAMEPEFKAYQARVVKNAKAMVGQFQERGYKIVSNGTENHLFLVDLIDKDITGKDADAALGAANITVNKNSVPNDPRSPFVTSGIRVGTPAITRRGFTEEDAKDLANWMCDVLDNIGNEEVIEATKQKVLEICKRLPVYA</sequence>
<proteinExistence type="inferred from homology"/>
<dbReference type="EC" id="2.1.2.1" evidence="1"/>
<dbReference type="EMBL" id="BA000031">
    <property type="protein sequence ID" value="BAC58978.1"/>
    <property type="molecule type" value="Genomic_DNA"/>
</dbReference>
<dbReference type="RefSeq" id="NP_797094.1">
    <property type="nucleotide sequence ID" value="NC_004603.1"/>
</dbReference>
<dbReference type="SMR" id="Q87RR2"/>
<dbReference type="GeneID" id="1188190"/>
<dbReference type="KEGG" id="vpa:VP0715"/>
<dbReference type="PATRIC" id="fig|223926.6.peg.684"/>
<dbReference type="eggNOG" id="COG0112">
    <property type="taxonomic scope" value="Bacteria"/>
</dbReference>
<dbReference type="HOGENOM" id="CLU_022477_2_1_6"/>
<dbReference type="UniPathway" id="UPA00193"/>
<dbReference type="UniPathway" id="UPA00288">
    <property type="reaction ID" value="UER01023"/>
</dbReference>
<dbReference type="Proteomes" id="UP000002493">
    <property type="component" value="Chromosome 1"/>
</dbReference>
<dbReference type="GO" id="GO:0005829">
    <property type="term" value="C:cytosol"/>
    <property type="evidence" value="ECO:0007669"/>
    <property type="project" value="TreeGrafter"/>
</dbReference>
<dbReference type="GO" id="GO:0004372">
    <property type="term" value="F:glycine hydroxymethyltransferase activity"/>
    <property type="evidence" value="ECO:0007669"/>
    <property type="project" value="UniProtKB-UniRule"/>
</dbReference>
<dbReference type="GO" id="GO:0030170">
    <property type="term" value="F:pyridoxal phosphate binding"/>
    <property type="evidence" value="ECO:0007669"/>
    <property type="project" value="UniProtKB-UniRule"/>
</dbReference>
<dbReference type="GO" id="GO:0019264">
    <property type="term" value="P:glycine biosynthetic process from serine"/>
    <property type="evidence" value="ECO:0007669"/>
    <property type="project" value="UniProtKB-UniRule"/>
</dbReference>
<dbReference type="GO" id="GO:0035999">
    <property type="term" value="P:tetrahydrofolate interconversion"/>
    <property type="evidence" value="ECO:0007669"/>
    <property type="project" value="UniProtKB-UniRule"/>
</dbReference>
<dbReference type="CDD" id="cd00378">
    <property type="entry name" value="SHMT"/>
    <property type="match status" value="1"/>
</dbReference>
<dbReference type="FunFam" id="3.40.640.10:FF:000001">
    <property type="entry name" value="Serine hydroxymethyltransferase"/>
    <property type="match status" value="1"/>
</dbReference>
<dbReference type="FunFam" id="3.90.1150.10:FF:000003">
    <property type="entry name" value="Serine hydroxymethyltransferase"/>
    <property type="match status" value="1"/>
</dbReference>
<dbReference type="Gene3D" id="3.90.1150.10">
    <property type="entry name" value="Aspartate Aminotransferase, domain 1"/>
    <property type="match status" value="1"/>
</dbReference>
<dbReference type="Gene3D" id="3.40.640.10">
    <property type="entry name" value="Type I PLP-dependent aspartate aminotransferase-like (Major domain)"/>
    <property type="match status" value="1"/>
</dbReference>
<dbReference type="HAMAP" id="MF_00051">
    <property type="entry name" value="SHMT"/>
    <property type="match status" value="1"/>
</dbReference>
<dbReference type="InterPro" id="IPR015424">
    <property type="entry name" value="PyrdxlP-dep_Trfase"/>
</dbReference>
<dbReference type="InterPro" id="IPR015421">
    <property type="entry name" value="PyrdxlP-dep_Trfase_major"/>
</dbReference>
<dbReference type="InterPro" id="IPR015422">
    <property type="entry name" value="PyrdxlP-dep_Trfase_small"/>
</dbReference>
<dbReference type="InterPro" id="IPR001085">
    <property type="entry name" value="Ser_HO-MeTrfase"/>
</dbReference>
<dbReference type="InterPro" id="IPR049943">
    <property type="entry name" value="Ser_HO-MeTrfase-like"/>
</dbReference>
<dbReference type="InterPro" id="IPR019798">
    <property type="entry name" value="Ser_HO-MeTrfase_PLP_BS"/>
</dbReference>
<dbReference type="InterPro" id="IPR039429">
    <property type="entry name" value="SHMT-like_dom"/>
</dbReference>
<dbReference type="NCBIfam" id="NF000586">
    <property type="entry name" value="PRK00011.1"/>
    <property type="match status" value="1"/>
</dbReference>
<dbReference type="PANTHER" id="PTHR11680">
    <property type="entry name" value="SERINE HYDROXYMETHYLTRANSFERASE"/>
    <property type="match status" value="1"/>
</dbReference>
<dbReference type="PANTHER" id="PTHR11680:SF50">
    <property type="entry name" value="SERINE HYDROXYMETHYLTRANSFERASE"/>
    <property type="match status" value="1"/>
</dbReference>
<dbReference type="Pfam" id="PF00464">
    <property type="entry name" value="SHMT"/>
    <property type="match status" value="1"/>
</dbReference>
<dbReference type="PIRSF" id="PIRSF000412">
    <property type="entry name" value="SHMT"/>
    <property type="match status" value="1"/>
</dbReference>
<dbReference type="SUPFAM" id="SSF53383">
    <property type="entry name" value="PLP-dependent transferases"/>
    <property type="match status" value="1"/>
</dbReference>
<dbReference type="PROSITE" id="PS00096">
    <property type="entry name" value="SHMT"/>
    <property type="match status" value="1"/>
</dbReference>